<accession>B3Q7K4</accession>
<organism>
    <name type="scientific">Rhodopseudomonas palustris (strain TIE-1)</name>
    <dbReference type="NCBI Taxonomy" id="395960"/>
    <lineage>
        <taxon>Bacteria</taxon>
        <taxon>Pseudomonadati</taxon>
        <taxon>Pseudomonadota</taxon>
        <taxon>Alphaproteobacteria</taxon>
        <taxon>Hyphomicrobiales</taxon>
        <taxon>Nitrobacteraceae</taxon>
        <taxon>Rhodopseudomonas</taxon>
    </lineage>
</organism>
<proteinExistence type="inferred from homology"/>
<reference key="1">
    <citation type="submission" date="2008-05" db="EMBL/GenBank/DDBJ databases">
        <title>Complete sequence of Rhodopseudomonas palustris TIE-1.</title>
        <authorList>
            <consortium name="US DOE Joint Genome Institute"/>
            <person name="Lucas S."/>
            <person name="Copeland A."/>
            <person name="Lapidus A."/>
            <person name="Glavina del Rio T."/>
            <person name="Dalin E."/>
            <person name="Tice H."/>
            <person name="Pitluck S."/>
            <person name="Chain P."/>
            <person name="Malfatti S."/>
            <person name="Shin M."/>
            <person name="Vergez L."/>
            <person name="Lang D."/>
            <person name="Schmutz J."/>
            <person name="Larimer F."/>
            <person name="Land M."/>
            <person name="Hauser L."/>
            <person name="Kyrpides N."/>
            <person name="Mikhailova N."/>
            <person name="Emerson D."/>
            <person name="Newman D.K."/>
            <person name="Roden E."/>
            <person name="Richardson P."/>
        </authorList>
    </citation>
    <scope>NUCLEOTIDE SEQUENCE [LARGE SCALE GENOMIC DNA]</scope>
    <source>
        <strain>TIE-1</strain>
    </source>
</reference>
<comment type="similarity">
    <text evidence="1">Belongs to the universal ribosomal protein uS2 family.</text>
</comment>
<sequence>MSLPEFSMRQLLEAGVHFGHQSHRWNPKMADYIFGVRNNIHIVDLTQTVPLLHRALQAISDTVAKGGRVLFVGTKRQAQDAVADAAKRSAQYFVNSRWLGGTLTNWKTISGSIRRLRHLEDVLSSADANAYTKKERLELQRERDKLNRSLGGIKDMGGLPDLIFVIDTNKEDIAIQEAQRLGIPVAAIVDTNCDPKGITYLVPGNDDAGRAIALYCDLVARAVIDGISRAQGDVGIDIGAAAQPLREDLPAAQATTFQGLPGPRGTPDDLKKLPGVSGAIEKKFNDLGIFHFWQLAELDQATAHQIGEELGLPSRADAWVAQAKSLTAEAE</sequence>
<evidence type="ECO:0000255" key="1">
    <source>
        <dbReference type="HAMAP-Rule" id="MF_00291"/>
    </source>
</evidence>
<evidence type="ECO:0000305" key="2"/>
<name>RS2_RHOPT</name>
<gene>
    <name evidence="1" type="primary">rpsB</name>
    <name type="ordered locus">Rpal_3268</name>
</gene>
<keyword id="KW-0687">Ribonucleoprotein</keyword>
<keyword id="KW-0689">Ribosomal protein</keyword>
<protein>
    <recommendedName>
        <fullName evidence="1">Small ribosomal subunit protein uS2</fullName>
    </recommendedName>
    <alternativeName>
        <fullName evidence="2">30S ribosomal protein S2</fullName>
    </alternativeName>
</protein>
<feature type="chain" id="PRO_1000115049" description="Small ribosomal subunit protein uS2">
    <location>
        <begin position="1"/>
        <end position="331"/>
    </location>
</feature>
<dbReference type="EMBL" id="CP001096">
    <property type="protein sequence ID" value="ACF01770.1"/>
    <property type="molecule type" value="Genomic_DNA"/>
</dbReference>
<dbReference type="RefSeq" id="WP_011158471.1">
    <property type="nucleotide sequence ID" value="NC_011004.1"/>
</dbReference>
<dbReference type="SMR" id="B3Q7K4"/>
<dbReference type="KEGG" id="rpt:Rpal_3268"/>
<dbReference type="HOGENOM" id="CLU_040318_2_1_5"/>
<dbReference type="OrthoDB" id="9808036at2"/>
<dbReference type="Proteomes" id="UP000001725">
    <property type="component" value="Chromosome"/>
</dbReference>
<dbReference type="GO" id="GO:0022627">
    <property type="term" value="C:cytosolic small ribosomal subunit"/>
    <property type="evidence" value="ECO:0007669"/>
    <property type="project" value="TreeGrafter"/>
</dbReference>
<dbReference type="GO" id="GO:0003735">
    <property type="term" value="F:structural constituent of ribosome"/>
    <property type="evidence" value="ECO:0007669"/>
    <property type="project" value="InterPro"/>
</dbReference>
<dbReference type="GO" id="GO:0006412">
    <property type="term" value="P:translation"/>
    <property type="evidence" value="ECO:0007669"/>
    <property type="project" value="UniProtKB-UniRule"/>
</dbReference>
<dbReference type="CDD" id="cd01425">
    <property type="entry name" value="RPS2"/>
    <property type="match status" value="1"/>
</dbReference>
<dbReference type="Gene3D" id="3.40.50.10490">
    <property type="entry name" value="Glucose-6-phosphate isomerase like protein, domain 1"/>
    <property type="match status" value="1"/>
</dbReference>
<dbReference type="Gene3D" id="1.10.287.610">
    <property type="entry name" value="Helix hairpin bin"/>
    <property type="match status" value="1"/>
</dbReference>
<dbReference type="HAMAP" id="MF_00291_B">
    <property type="entry name" value="Ribosomal_uS2_B"/>
    <property type="match status" value="1"/>
</dbReference>
<dbReference type="InterPro" id="IPR001865">
    <property type="entry name" value="Ribosomal_uS2"/>
</dbReference>
<dbReference type="InterPro" id="IPR005706">
    <property type="entry name" value="Ribosomal_uS2_bac/mit/plastid"/>
</dbReference>
<dbReference type="InterPro" id="IPR018130">
    <property type="entry name" value="Ribosomal_uS2_CS"/>
</dbReference>
<dbReference type="InterPro" id="IPR023591">
    <property type="entry name" value="Ribosomal_uS2_flav_dom_sf"/>
</dbReference>
<dbReference type="NCBIfam" id="NF008966">
    <property type="entry name" value="PRK12311.1"/>
    <property type="match status" value="1"/>
</dbReference>
<dbReference type="NCBIfam" id="TIGR01011">
    <property type="entry name" value="rpsB_bact"/>
    <property type="match status" value="1"/>
</dbReference>
<dbReference type="PANTHER" id="PTHR12534">
    <property type="entry name" value="30S RIBOSOMAL PROTEIN S2 PROKARYOTIC AND ORGANELLAR"/>
    <property type="match status" value="1"/>
</dbReference>
<dbReference type="PANTHER" id="PTHR12534:SF0">
    <property type="entry name" value="SMALL RIBOSOMAL SUBUNIT PROTEIN US2M"/>
    <property type="match status" value="1"/>
</dbReference>
<dbReference type="Pfam" id="PF00318">
    <property type="entry name" value="Ribosomal_S2"/>
    <property type="match status" value="1"/>
</dbReference>
<dbReference type="PRINTS" id="PR00395">
    <property type="entry name" value="RIBOSOMALS2"/>
</dbReference>
<dbReference type="SUPFAM" id="SSF52313">
    <property type="entry name" value="Ribosomal protein S2"/>
    <property type="match status" value="1"/>
</dbReference>
<dbReference type="PROSITE" id="PS00962">
    <property type="entry name" value="RIBOSOMAL_S2_1"/>
    <property type="match status" value="1"/>
</dbReference>
<dbReference type="PROSITE" id="PS00963">
    <property type="entry name" value="RIBOSOMAL_S2_2"/>
    <property type="match status" value="1"/>
</dbReference>